<feature type="chain" id="PRO_1000125939" description="Small ribosomal subunit protein uS7">
    <location>
        <begin position="1"/>
        <end position="156"/>
    </location>
</feature>
<sequence length="156" mass="17604">MPRRRVIGQRKILPDPKFGSELLAKFVNILMVDGKKSTAESIVYSALETLAQRSGKSELEAFEVALENVRPTVEVKSRRVGGSTYQVPVEVRPVRRNALAMRWIVEAARKRGDKSMALRLANELSDAAENKGTAVKKREDVHRMAEANKAFAHYRW</sequence>
<gene>
    <name evidence="1" type="primary">rpsG</name>
    <name type="ordered locus">ECIAI1_3477</name>
</gene>
<accession>B7M1P2</accession>
<proteinExistence type="inferred from homology"/>
<evidence type="ECO:0000255" key="1">
    <source>
        <dbReference type="HAMAP-Rule" id="MF_00480"/>
    </source>
</evidence>
<evidence type="ECO:0000305" key="2"/>
<protein>
    <recommendedName>
        <fullName evidence="1">Small ribosomal subunit protein uS7</fullName>
    </recommendedName>
    <alternativeName>
        <fullName evidence="2">30S ribosomal protein S7</fullName>
    </alternativeName>
</protein>
<comment type="function">
    <text evidence="1">One of the primary rRNA binding proteins, it binds directly to 16S rRNA where it nucleates assembly of the head domain of the 30S subunit. Is located at the subunit interface close to the decoding center, probably blocks exit of the E-site tRNA.</text>
</comment>
<comment type="subunit">
    <text evidence="1">Part of the 30S ribosomal subunit. Contacts proteins S9 and S11.</text>
</comment>
<comment type="similarity">
    <text evidence="1">Belongs to the universal ribosomal protein uS7 family.</text>
</comment>
<name>RS7_ECO8A</name>
<keyword id="KW-0687">Ribonucleoprotein</keyword>
<keyword id="KW-0689">Ribosomal protein</keyword>
<keyword id="KW-0694">RNA-binding</keyword>
<keyword id="KW-0699">rRNA-binding</keyword>
<keyword id="KW-0820">tRNA-binding</keyword>
<reference key="1">
    <citation type="journal article" date="2009" name="PLoS Genet.">
        <title>Organised genome dynamics in the Escherichia coli species results in highly diverse adaptive paths.</title>
        <authorList>
            <person name="Touchon M."/>
            <person name="Hoede C."/>
            <person name="Tenaillon O."/>
            <person name="Barbe V."/>
            <person name="Baeriswyl S."/>
            <person name="Bidet P."/>
            <person name="Bingen E."/>
            <person name="Bonacorsi S."/>
            <person name="Bouchier C."/>
            <person name="Bouvet O."/>
            <person name="Calteau A."/>
            <person name="Chiapello H."/>
            <person name="Clermont O."/>
            <person name="Cruveiller S."/>
            <person name="Danchin A."/>
            <person name="Diard M."/>
            <person name="Dossat C."/>
            <person name="Karoui M.E."/>
            <person name="Frapy E."/>
            <person name="Garry L."/>
            <person name="Ghigo J.M."/>
            <person name="Gilles A.M."/>
            <person name="Johnson J."/>
            <person name="Le Bouguenec C."/>
            <person name="Lescat M."/>
            <person name="Mangenot S."/>
            <person name="Martinez-Jehanne V."/>
            <person name="Matic I."/>
            <person name="Nassif X."/>
            <person name="Oztas S."/>
            <person name="Petit M.A."/>
            <person name="Pichon C."/>
            <person name="Rouy Z."/>
            <person name="Ruf C.S."/>
            <person name="Schneider D."/>
            <person name="Tourret J."/>
            <person name="Vacherie B."/>
            <person name="Vallenet D."/>
            <person name="Medigue C."/>
            <person name="Rocha E.P.C."/>
            <person name="Denamur E."/>
        </authorList>
    </citation>
    <scope>NUCLEOTIDE SEQUENCE [LARGE SCALE GENOMIC DNA]</scope>
    <source>
        <strain>IAI1</strain>
    </source>
</reference>
<dbReference type="EMBL" id="CU928160">
    <property type="protein sequence ID" value="CAR00279.1"/>
    <property type="molecule type" value="Genomic_DNA"/>
</dbReference>
<dbReference type="RefSeq" id="WP_001138043.1">
    <property type="nucleotide sequence ID" value="NC_011741.1"/>
</dbReference>
<dbReference type="SMR" id="B7M1P2"/>
<dbReference type="GeneID" id="93778657"/>
<dbReference type="KEGG" id="ecr:ECIAI1_3477"/>
<dbReference type="HOGENOM" id="CLU_072226_1_1_6"/>
<dbReference type="GO" id="GO:0015935">
    <property type="term" value="C:small ribosomal subunit"/>
    <property type="evidence" value="ECO:0007669"/>
    <property type="project" value="InterPro"/>
</dbReference>
<dbReference type="GO" id="GO:0019843">
    <property type="term" value="F:rRNA binding"/>
    <property type="evidence" value="ECO:0007669"/>
    <property type="project" value="UniProtKB-UniRule"/>
</dbReference>
<dbReference type="GO" id="GO:0003735">
    <property type="term" value="F:structural constituent of ribosome"/>
    <property type="evidence" value="ECO:0007669"/>
    <property type="project" value="InterPro"/>
</dbReference>
<dbReference type="GO" id="GO:0000049">
    <property type="term" value="F:tRNA binding"/>
    <property type="evidence" value="ECO:0007669"/>
    <property type="project" value="UniProtKB-UniRule"/>
</dbReference>
<dbReference type="GO" id="GO:0006412">
    <property type="term" value="P:translation"/>
    <property type="evidence" value="ECO:0007669"/>
    <property type="project" value="UniProtKB-UniRule"/>
</dbReference>
<dbReference type="CDD" id="cd14869">
    <property type="entry name" value="uS7_Bacteria"/>
    <property type="match status" value="1"/>
</dbReference>
<dbReference type="FunFam" id="1.10.455.10:FF:000001">
    <property type="entry name" value="30S ribosomal protein S7"/>
    <property type="match status" value="1"/>
</dbReference>
<dbReference type="Gene3D" id="1.10.455.10">
    <property type="entry name" value="Ribosomal protein S7 domain"/>
    <property type="match status" value="1"/>
</dbReference>
<dbReference type="HAMAP" id="MF_00480_B">
    <property type="entry name" value="Ribosomal_uS7_B"/>
    <property type="match status" value="1"/>
</dbReference>
<dbReference type="InterPro" id="IPR000235">
    <property type="entry name" value="Ribosomal_uS7"/>
</dbReference>
<dbReference type="InterPro" id="IPR005717">
    <property type="entry name" value="Ribosomal_uS7_bac/org-type"/>
</dbReference>
<dbReference type="InterPro" id="IPR020606">
    <property type="entry name" value="Ribosomal_uS7_CS"/>
</dbReference>
<dbReference type="InterPro" id="IPR023798">
    <property type="entry name" value="Ribosomal_uS7_dom"/>
</dbReference>
<dbReference type="InterPro" id="IPR036823">
    <property type="entry name" value="Ribosomal_uS7_dom_sf"/>
</dbReference>
<dbReference type="NCBIfam" id="TIGR01029">
    <property type="entry name" value="rpsG_bact"/>
    <property type="match status" value="1"/>
</dbReference>
<dbReference type="PANTHER" id="PTHR11205">
    <property type="entry name" value="RIBOSOMAL PROTEIN S7"/>
    <property type="match status" value="1"/>
</dbReference>
<dbReference type="Pfam" id="PF00177">
    <property type="entry name" value="Ribosomal_S7"/>
    <property type="match status" value="1"/>
</dbReference>
<dbReference type="PIRSF" id="PIRSF002122">
    <property type="entry name" value="RPS7p_RPS7a_RPS5e_RPS7o"/>
    <property type="match status" value="1"/>
</dbReference>
<dbReference type="SUPFAM" id="SSF47973">
    <property type="entry name" value="Ribosomal protein S7"/>
    <property type="match status" value="1"/>
</dbReference>
<dbReference type="PROSITE" id="PS00052">
    <property type="entry name" value="RIBOSOMAL_S7"/>
    <property type="match status" value="1"/>
</dbReference>
<organism>
    <name type="scientific">Escherichia coli O8 (strain IAI1)</name>
    <dbReference type="NCBI Taxonomy" id="585034"/>
    <lineage>
        <taxon>Bacteria</taxon>
        <taxon>Pseudomonadati</taxon>
        <taxon>Pseudomonadota</taxon>
        <taxon>Gammaproteobacteria</taxon>
        <taxon>Enterobacterales</taxon>
        <taxon>Enterobacteriaceae</taxon>
        <taxon>Escherichia</taxon>
    </lineage>
</organism>